<comment type="function">
    <text evidence="1">One of the proteins required for the normal export of preproteins out of the cell cytoplasm. It is a molecular chaperone that binds to a subset of precursor proteins, maintaining them in a translocation-competent state. It also specifically binds to its receptor SecA.</text>
</comment>
<comment type="subunit">
    <text evidence="1">Homotetramer, a dimer of dimers. One homotetramer interacts with 1 SecA dimer.</text>
</comment>
<comment type="subcellular location">
    <subcellularLocation>
        <location evidence="1">Cytoplasm</location>
    </subcellularLocation>
</comment>
<comment type="similarity">
    <text evidence="1">Belongs to the SecB family.</text>
</comment>
<proteinExistence type="inferred from homology"/>
<keyword id="KW-0143">Chaperone</keyword>
<keyword id="KW-0963">Cytoplasm</keyword>
<keyword id="KW-0653">Protein transport</keyword>
<keyword id="KW-1185">Reference proteome</keyword>
<keyword id="KW-0811">Translocation</keyword>
<keyword id="KW-0813">Transport</keyword>
<reference key="1">
    <citation type="journal article" date="2001" name="Proc. Natl. Acad. Sci. U.S.A.">
        <title>Complete genome sequence of Caulobacter crescentus.</title>
        <authorList>
            <person name="Nierman W.C."/>
            <person name="Feldblyum T.V."/>
            <person name="Laub M.T."/>
            <person name="Paulsen I.T."/>
            <person name="Nelson K.E."/>
            <person name="Eisen J.A."/>
            <person name="Heidelberg J.F."/>
            <person name="Alley M.R.K."/>
            <person name="Ohta N."/>
            <person name="Maddock J.R."/>
            <person name="Potocka I."/>
            <person name="Nelson W.C."/>
            <person name="Newton A."/>
            <person name="Stephens C."/>
            <person name="Phadke N.D."/>
            <person name="Ely B."/>
            <person name="DeBoy R.T."/>
            <person name="Dodson R.J."/>
            <person name="Durkin A.S."/>
            <person name="Gwinn M.L."/>
            <person name="Haft D.H."/>
            <person name="Kolonay J.F."/>
            <person name="Smit J."/>
            <person name="Craven M.B."/>
            <person name="Khouri H.M."/>
            <person name="Shetty J."/>
            <person name="Berry K.J."/>
            <person name="Utterback T.R."/>
            <person name="Tran K."/>
            <person name="Wolf A.M."/>
            <person name="Vamathevan J.J."/>
            <person name="Ermolaeva M.D."/>
            <person name="White O."/>
            <person name="Salzberg S.L."/>
            <person name="Venter J.C."/>
            <person name="Shapiro L."/>
            <person name="Fraser C.M."/>
        </authorList>
    </citation>
    <scope>NUCLEOTIDE SEQUENCE [LARGE SCALE GENOMIC DNA]</scope>
    <source>
        <strain>ATCC 19089 / CIP 103742 / CB 15</strain>
    </source>
</reference>
<name>SECB_CAUVC</name>
<feature type="chain" id="PRO_0000055360" description="Protein-export protein SecB">
    <location>
        <begin position="1"/>
        <end position="163"/>
    </location>
</feature>
<protein>
    <recommendedName>
        <fullName evidence="1">Protein-export protein SecB</fullName>
    </recommendedName>
</protein>
<organism>
    <name type="scientific">Caulobacter vibrioides (strain ATCC 19089 / CIP 103742 / CB 15)</name>
    <name type="common">Caulobacter crescentus</name>
    <dbReference type="NCBI Taxonomy" id="190650"/>
    <lineage>
        <taxon>Bacteria</taxon>
        <taxon>Pseudomonadati</taxon>
        <taxon>Pseudomonadota</taxon>
        <taxon>Alphaproteobacteria</taxon>
        <taxon>Caulobacterales</taxon>
        <taxon>Caulobacteraceae</taxon>
        <taxon>Caulobacter</taxon>
    </lineage>
</organism>
<evidence type="ECO:0000255" key="1">
    <source>
        <dbReference type="HAMAP-Rule" id="MF_00821"/>
    </source>
</evidence>
<gene>
    <name evidence="1" type="primary">secB</name>
    <name type="ordered locus">CC_3742</name>
</gene>
<dbReference type="EMBL" id="AE005673">
    <property type="protein sequence ID" value="AAK25704.1"/>
    <property type="molecule type" value="Genomic_DNA"/>
</dbReference>
<dbReference type="PIR" id="D87713">
    <property type="entry name" value="D87713"/>
</dbReference>
<dbReference type="RefSeq" id="NP_422536.1">
    <property type="nucleotide sequence ID" value="NC_002696.2"/>
</dbReference>
<dbReference type="RefSeq" id="WP_010921569.1">
    <property type="nucleotide sequence ID" value="NC_002696.2"/>
</dbReference>
<dbReference type="SMR" id="Q9A224"/>
<dbReference type="STRING" id="190650.CC_3742"/>
<dbReference type="EnsemblBacteria" id="AAK25704">
    <property type="protein sequence ID" value="AAK25704"/>
    <property type="gene ID" value="CC_3742"/>
</dbReference>
<dbReference type="KEGG" id="ccr:CC_3742"/>
<dbReference type="PATRIC" id="fig|190650.5.peg.3744"/>
<dbReference type="eggNOG" id="COG1952">
    <property type="taxonomic scope" value="Bacteria"/>
</dbReference>
<dbReference type="HOGENOM" id="CLU_111574_0_0_5"/>
<dbReference type="BioCyc" id="CAULO:CC3742-MONOMER"/>
<dbReference type="Proteomes" id="UP000001816">
    <property type="component" value="Chromosome"/>
</dbReference>
<dbReference type="GO" id="GO:0005737">
    <property type="term" value="C:cytoplasm"/>
    <property type="evidence" value="ECO:0007669"/>
    <property type="project" value="UniProtKB-SubCell"/>
</dbReference>
<dbReference type="GO" id="GO:0051082">
    <property type="term" value="F:unfolded protein binding"/>
    <property type="evidence" value="ECO:0007669"/>
    <property type="project" value="InterPro"/>
</dbReference>
<dbReference type="GO" id="GO:0006457">
    <property type="term" value="P:protein folding"/>
    <property type="evidence" value="ECO:0007669"/>
    <property type="project" value="UniProtKB-UniRule"/>
</dbReference>
<dbReference type="GO" id="GO:0051262">
    <property type="term" value="P:protein tetramerization"/>
    <property type="evidence" value="ECO:0007669"/>
    <property type="project" value="InterPro"/>
</dbReference>
<dbReference type="GO" id="GO:0015031">
    <property type="term" value="P:protein transport"/>
    <property type="evidence" value="ECO:0007669"/>
    <property type="project" value="UniProtKB-UniRule"/>
</dbReference>
<dbReference type="Gene3D" id="3.10.420.10">
    <property type="entry name" value="SecB-like"/>
    <property type="match status" value="1"/>
</dbReference>
<dbReference type="HAMAP" id="MF_00821">
    <property type="entry name" value="SecB"/>
    <property type="match status" value="1"/>
</dbReference>
<dbReference type="InterPro" id="IPR003708">
    <property type="entry name" value="SecB"/>
</dbReference>
<dbReference type="InterPro" id="IPR035958">
    <property type="entry name" value="SecB-like_sf"/>
</dbReference>
<dbReference type="NCBIfam" id="NF004392">
    <property type="entry name" value="PRK05751.1-3"/>
    <property type="match status" value="1"/>
</dbReference>
<dbReference type="NCBIfam" id="TIGR00809">
    <property type="entry name" value="secB"/>
    <property type="match status" value="1"/>
</dbReference>
<dbReference type="PANTHER" id="PTHR36918">
    <property type="match status" value="1"/>
</dbReference>
<dbReference type="PANTHER" id="PTHR36918:SF1">
    <property type="entry name" value="PROTEIN-EXPORT PROTEIN SECB"/>
    <property type="match status" value="1"/>
</dbReference>
<dbReference type="Pfam" id="PF02556">
    <property type="entry name" value="SecB"/>
    <property type="match status" value="1"/>
</dbReference>
<dbReference type="PRINTS" id="PR01594">
    <property type="entry name" value="SECBCHAPRONE"/>
</dbReference>
<dbReference type="SUPFAM" id="SSF54611">
    <property type="entry name" value="SecB-like"/>
    <property type="match status" value="1"/>
</dbReference>
<sequence>MTDTIAPEATPEGAEAGQAGIRILAQFVRDFSFENPLAPDALRAGAAQPAIDMGVEMNARGRADGLFEVDLKLSARAEREGQAVFHVEVVYGGLFHIAGIAEEDLEPVLLIECPRFLFPYARRLISDVTAEGGFPPFLIDPIDFAGVYAARKAQAEGQQVGNA</sequence>
<accession>Q9A224</accession>